<dbReference type="EC" id="2.5.1.42" evidence="1"/>
<dbReference type="EMBL" id="AE004437">
    <property type="protein sequence ID" value="AAG19118.1"/>
    <property type="status" value="ALT_INIT"/>
    <property type="molecule type" value="Genomic_DNA"/>
</dbReference>
<dbReference type="PIR" id="B84219">
    <property type="entry name" value="B84219"/>
</dbReference>
<dbReference type="SMR" id="Q9HRP0"/>
<dbReference type="FunCoup" id="Q9HRP0">
    <property type="interactions" value="82"/>
</dbReference>
<dbReference type="STRING" id="64091.VNG_0610G"/>
<dbReference type="PaxDb" id="64091-VNG_0610G"/>
<dbReference type="KEGG" id="hal:VNG_0610G"/>
<dbReference type="PATRIC" id="fig|64091.14.peg.467"/>
<dbReference type="HOGENOM" id="CLU_073311_1_1_2"/>
<dbReference type="InParanoid" id="Q9HRP0"/>
<dbReference type="OrthoDB" id="11851at2157"/>
<dbReference type="PhylomeDB" id="Q9HRP0"/>
<dbReference type="UniPathway" id="UPA00940"/>
<dbReference type="Proteomes" id="UP000000554">
    <property type="component" value="Chromosome"/>
</dbReference>
<dbReference type="GO" id="GO:0005886">
    <property type="term" value="C:plasma membrane"/>
    <property type="evidence" value="ECO:0007669"/>
    <property type="project" value="UniProtKB-SubCell"/>
</dbReference>
<dbReference type="GO" id="GO:0047295">
    <property type="term" value="F:geranylgeranylglycerol-phosphate geranylgeranyltransferase activity"/>
    <property type="evidence" value="ECO:0007669"/>
    <property type="project" value="UniProtKB-UniRule"/>
</dbReference>
<dbReference type="GO" id="GO:0000287">
    <property type="term" value="F:magnesium ion binding"/>
    <property type="evidence" value="ECO:0007669"/>
    <property type="project" value="UniProtKB-UniRule"/>
</dbReference>
<dbReference type="GO" id="GO:0046474">
    <property type="term" value="P:glycerophospholipid biosynthetic process"/>
    <property type="evidence" value="ECO:0007669"/>
    <property type="project" value="UniProtKB-UniRule"/>
</dbReference>
<dbReference type="CDD" id="cd13961">
    <property type="entry name" value="PT_UbiA_DGGGPS"/>
    <property type="match status" value="1"/>
</dbReference>
<dbReference type="Gene3D" id="1.10.357.140">
    <property type="entry name" value="UbiA prenyltransferase"/>
    <property type="match status" value="1"/>
</dbReference>
<dbReference type="Gene3D" id="1.20.120.1780">
    <property type="entry name" value="UbiA prenyltransferase"/>
    <property type="match status" value="1"/>
</dbReference>
<dbReference type="HAMAP" id="MF_01286">
    <property type="entry name" value="DGGGP_synth"/>
    <property type="match status" value="1"/>
</dbReference>
<dbReference type="InterPro" id="IPR023547">
    <property type="entry name" value="DGGGP_synth"/>
</dbReference>
<dbReference type="InterPro" id="IPR050475">
    <property type="entry name" value="Prenyltransferase_related"/>
</dbReference>
<dbReference type="InterPro" id="IPR000537">
    <property type="entry name" value="UbiA_prenyltransferase"/>
</dbReference>
<dbReference type="InterPro" id="IPR044878">
    <property type="entry name" value="UbiA_sf"/>
</dbReference>
<dbReference type="NCBIfam" id="NF009521">
    <property type="entry name" value="PRK12882.1"/>
    <property type="match status" value="1"/>
</dbReference>
<dbReference type="PANTHER" id="PTHR42723">
    <property type="entry name" value="CHLOROPHYLL SYNTHASE"/>
    <property type="match status" value="1"/>
</dbReference>
<dbReference type="PANTHER" id="PTHR42723:SF1">
    <property type="entry name" value="CHLOROPHYLL SYNTHASE, CHLOROPLASTIC"/>
    <property type="match status" value="1"/>
</dbReference>
<dbReference type="Pfam" id="PF01040">
    <property type="entry name" value="UbiA"/>
    <property type="match status" value="1"/>
</dbReference>
<evidence type="ECO:0000255" key="1">
    <source>
        <dbReference type="HAMAP-Rule" id="MF_01286"/>
    </source>
</evidence>
<evidence type="ECO:0000305" key="2"/>
<proteinExistence type="inferred from homology"/>
<feature type="chain" id="PRO_0000350693" description="Digeranylgeranylglyceryl phosphate synthase">
    <location>
        <begin position="1"/>
        <end position="276"/>
    </location>
</feature>
<feature type="transmembrane region" description="Helical" evidence="1">
    <location>
        <begin position="14"/>
        <end position="34"/>
    </location>
</feature>
<feature type="transmembrane region" description="Helical" evidence="1">
    <location>
        <begin position="90"/>
        <end position="110"/>
    </location>
</feature>
<feature type="transmembrane region" description="Helical" evidence="1">
    <location>
        <begin position="144"/>
        <end position="164"/>
    </location>
</feature>
<feature type="transmembrane region" description="Helical" evidence="1">
    <location>
        <begin position="200"/>
        <end position="220"/>
    </location>
</feature>
<feature type="transmembrane region" description="Helical" evidence="1">
    <location>
        <begin position="221"/>
        <end position="241"/>
    </location>
</feature>
<reference key="1">
    <citation type="journal article" date="2000" name="Proc. Natl. Acad. Sci. U.S.A.">
        <title>Genome sequence of Halobacterium species NRC-1.</title>
        <authorList>
            <person name="Ng W.V."/>
            <person name="Kennedy S.P."/>
            <person name="Mahairas G.G."/>
            <person name="Berquist B."/>
            <person name="Pan M."/>
            <person name="Shukla H.D."/>
            <person name="Lasky S.R."/>
            <person name="Baliga N.S."/>
            <person name="Thorsson V."/>
            <person name="Sbrogna J."/>
            <person name="Swartzell S."/>
            <person name="Weir D."/>
            <person name="Hall J."/>
            <person name="Dahl T.A."/>
            <person name="Welti R."/>
            <person name="Goo Y.A."/>
            <person name="Leithauser B."/>
            <person name="Keller K."/>
            <person name="Cruz R."/>
            <person name="Danson M.J."/>
            <person name="Hough D.W."/>
            <person name="Maddocks D.G."/>
            <person name="Jablonski P.E."/>
            <person name="Krebs M.P."/>
            <person name="Angevine C.M."/>
            <person name="Dale H."/>
            <person name="Isenbarger T.A."/>
            <person name="Peck R.F."/>
            <person name="Pohlschroder M."/>
            <person name="Spudich J.L."/>
            <person name="Jung K.-H."/>
            <person name="Alam M."/>
            <person name="Freitas T."/>
            <person name="Hou S."/>
            <person name="Daniels C.J."/>
            <person name="Dennis P.P."/>
            <person name="Omer A.D."/>
            <person name="Ebhardt H."/>
            <person name="Lowe T.M."/>
            <person name="Liang P."/>
            <person name="Riley M."/>
            <person name="Hood L."/>
            <person name="DasSarma S."/>
        </authorList>
    </citation>
    <scope>NUCLEOTIDE SEQUENCE [LARGE SCALE GENOMIC DNA]</scope>
    <source>
        <strain>ATCC 700922 / JCM 11081 / NRC-1</strain>
    </source>
</reference>
<organism>
    <name type="scientific">Halobacterium salinarum (strain ATCC 700922 / JCM 11081 / NRC-1)</name>
    <name type="common">Halobacterium halobium</name>
    <dbReference type="NCBI Taxonomy" id="64091"/>
    <lineage>
        <taxon>Archaea</taxon>
        <taxon>Methanobacteriati</taxon>
        <taxon>Methanobacteriota</taxon>
        <taxon>Stenosarchaea group</taxon>
        <taxon>Halobacteria</taxon>
        <taxon>Halobacteriales</taxon>
        <taxon>Halobacteriaceae</taxon>
        <taxon>Halobacterium</taxon>
        <taxon>Halobacterium salinarum NRC-34001</taxon>
    </lineage>
</organism>
<accession>Q9HRP0</accession>
<name>DGGGP_HALSA</name>
<protein>
    <recommendedName>
        <fullName evidence="1">Digeranylgeranylglyceryl phosphate synthase</fullName>
        <shortName evidence="1">DGGGP synthase</shortName>
        <shortName evidence="1">DGGGPS</shortName>
        <ecNumber evidence="1">2.5.1.42</ecNumber>
    </recommendedName>
    <alternativeName>
        <fullName evidence="1">(S)-2,3-di-O-geranylgeranylglyceryl phosphate synthase</fullName>
    </alternativeName>
    <alternativeName>
        <fullName evidence="1">Geranylgeranylglycerol-phosphate geranylgeranyltransferase</fullName>
    </alternativeName>
</protein>
<comment type="function">
    <text evidence="1">Prenyltransferase that catalyzes the transfer of the geranylgeranyl moiety of geranylgeranyl diphosphate (GGPP) to the C2 hydroxyl of (S)-3-O-geranylgeranylglyceryl phosphate (GGGP). This reaction is the second ether-bond-formation step in the biosynthesis of archaeal membrane lipids.</text>
</comment>
<comment type="catalytic activity">
    <reaction evidence="1">
        <text>sn-3-O-(geranylgeranyl)glycerol 1-phosphate + (2E,6E,10E)-geranylgeranyl diphosphate = 2,3-bis-O-(geranylgeranyl)-sn-glycerol 1-phosphate + diphosphate</text>
        <dbReference type="Rhea" id="RHEA:18109"/>
        <dbReference type="ChEBI" id="CHEBI:33019"/>
        <dbReference type="ChEBI" id="CHEBI:57677"/>
        <dbReference type="ChEBI" id="CHEBI:58756"/>
        <dbReference type="ChEBI" id="CHEBI:58837"/>
        <dbReference type="EC" id="2.5.1.42"/>
    </reaction>
</comment>
<comment type="cofactor">
    <cofactor evidence="1">
        <name>Mg(2+)</name>
        <dbReference type="ChEBI" id="CHEBI:18420"/>
    </cofactor>
</comment>
<comment type="pathway">
    <text evidence="1">Membrane lipid metabolism; glycerophospholipid metabolism.</text>
</comment>
<comment type="subcellular location">
    <subcellularLocation>
        <location evidence="1">Cell membrane</location>
        <topology evidence="1">Multi-pass membrane protein</topology>
    </subcellularLocation>
</comment>
<comment type="similarity">
    <text evidence="1">Belongs to the UbiA prenyltransferase family. DGGGP synthase subfamily.</text>
</comment>
<comment type="sequence caution" evidence="2">
    <conflict type="erroneous initiation">
        <sequence resource="EMBL-CDS" id="AAG19118"/>
    </conflict>
</comment>
<gene>
    <name type="ordered locus">VNG_0610G</name>
</gene>
<sequence length="276" mass="27621">METGRGLVELARPVNTLAAGALTFIGAFVAGGAVGRPAATGAAVGATWLATAGGNAINDYFDREVDRINDPDRAIPRGAVSPRGALAYSVVLFVGAAALAATLPVLAVCIAALNLAGLLTYTQYLKGRPGAGNALVAYLGGSTFVFGAAAVGSPLAGGVLAALAALSTFAREVIKDVEDLAGDRAAGLRTLPVVVGHQRALAVSAVFVVGAAAASPVPYLVGVFGWWYLVAVCPGVVVMVVAAARSYTDPAAGQRLLKRGQLLAAAAFVVGRLVTP</sequence>
<keyword id="KW-1003">Cell membrane</keyword>
<keyword id="KW-0444">Lipid biosynthesis</keyword>
<keyword id="KW-0443">Lipid metabolism</keyword>
<keyword id="KW-0460">Magnesium</keyword>
<keyword id="KW-0472">Membrane</keyword>
<keyword id="KW-0594">Phospholipid biosynthesis</keyword>
<keyword id="KW-1208">Phospholipid metabolism</keyword>
<keyword id="KW-1185">Reference proteome</keyword>
<keyword id="KW-0808">Transferase</keyword>
<keyword id="KW-0812">Transmembrane</keyword>
<keyword id="KW-1133">Transmembrane helix</keyword>